<gene>
    <name evidence="1" type="primary">acsF</name>
</gene>
<comment type="function">
    <text evidence="2">Catalyzes the formation of the isocyclic ring in chlorophyll biosynthesis in aerobic conditions. Mediates the cyclase reaction, which results in the formation of divinylprotochlorophyllide (Pchlide) characteristic of all chlorophylls from magnesium-protoporphyrin IX 13-monomethyl ester (MgPMME).</text>
</comment>
<comment type="catalytic activity">
    <reaction evidence="1">
        <text>Mg-protoporphyrin IX 13-monomethyl ester + 3 NADPH + 3 O2 + 2 H(+) = 3,8-divinyl protochlorophyllide a + 3 NADP(+) + 5 H2O</text>
        <dbReference type="Rhea" id="RHEA:33235"/>
        <dbReference type="ChEBI" id="CHEBI:15377"/>
        <dbReference type="ChEBI" id="CHEBI:15378"/>
        <dbReference type="ChEBI" id="CHEBI:15379"/>
        <dbReference type="ChEBI" id="CHEBI:57783"/>
        <dbReference type="ChEBI" id="CHEBI:58349"/>
        <dbReference type="ChEBI" id="CHEBI:58632"/>
        <dbReference type="ChEBI" id="CHEBI:60491"/>
        <dbReference type="EC" id="1.14.13.81"/>
    </reaction>
</comment>
<comment type="cofactor">
    <cofactor evidence="1">
        <name>Fe cation</name>
        <dbReference type="ChEBI" id="CHEBI:24875"/>
    </cofactor>
</comment>
<comment type="pathway">
    <text>Porphyrin-containing compound metabolism; chlorophyll biosynthesis.</text>
</comment>
<comment type="disruption phenotype">
    <text evidence="2">No phenotype under photosynthesis or low-aeration respiratory growth conditions. In contrast, under highly aerated respiratory growth conditions, the absence of AcsF leads to an accumulation of MgPMME.</text>
</comment>
<comment type="similarity">
    <text evidence="1">Belongs to the AcsF family.</text>
</comment>
<evidence type="ECO:0000255" key="1">
    <source>
        <dbReference type="HAMAP-Rule" id="MF_01840"/>
    </source>
</evidence>
<evidence type="ECO:0000269" key="2">
    <source>
    </source>
</evidence>
<protein>
    <recommendedName>
        <fullName evidence="1">Aerobic magnesium-protoporphyrin IX monomethyl ester [oxidative] cyclase</fullName>
        <shortName evidence="1">Aerobic Mg-protoporphyrin IX monomethyl ester oxidative cyclase</shortName>
        <ecNumber evidence="1">1.14.13.81</ecNumber>
    </recommendedName>
</protein>
<sequence length="358" mass="41513">MLATPTIESPEEAARRAKESTLLSPRFYTTDYAAMNAIDVSSIRAEWDAMLAEYEGDNNHDHFQRTPEFAQEVAERFSQVSPELRQEFLDFLVSSVTSEFSGCVLYNEIQKNVENPDVKALMRYMARNESRHAGFINQALRDFGLGINLGGLKRTKAYTYFKPKYIFYATYLSEKIGYARYITIYRQLERHPDKRFHPIFRWFERWCNDEFRHGESFALILRAHPHLISGANLLWVRFFLLAVYATMYVRDHMRPQLHEAMGLESTDYDYRVFQITNEISKQVFPISLDIDHQAFRAGMERLVRVKTKVDAAKARGGLVGRLQQAAWAAAGAATFARMYLIPVRRHALPAQVRMAPAW</sequence>
<keyword id="KW-0077">Bacteriochlorophyll biosynthesis</keyword>
<keyword id="KW-0149">Chlorophyll biosynthesis</keyword>
<keyword id="KW-0408">Iron</keyword>
<keyword id="KW-0479">Metal-binding</keyword>
<keyword id="KW-0521">NADP</keyword>
<keyword id="KW-0560">Oxidoreductase</keyword>
<keyword id="KW-0602">Photosynthesis</keyword>
<name>ACSF_RUBGE</name>
<dbReference type="EC" id="1.14.13.81" evidence="1"/>
<dbReference type="EMBL" id="AH012710">
    <property type="protein sequence ID" value="AAL25840.2"/>
    <property type="molecule type" value="Genomic_DNA"/>
</dbReference>
<dbReference type="SMR" id="P0DJN9"/>
<dbReference type="BioCyc" id="MetaCyc:MONOMER-13266"/>
<dbReference type="BRENDA" id="1.14.13.81">
    <property type="organism ID" value="5401"/>
</dbReference>
<dbReference type="UniPathway" id="UPA00668"/>
<dbReference type="GO" id="GO:0005506">
    <property type="term" value="F:iron ion binding"/>
    <property type="evidence" value="ECO:0007669"/>
    <property type="project" value="UniProtKB-UniRule"/>
</dbReference>
<dbReference type="GO" id="GO:0048529">
    <property type="term" value="F:magnesium-protoporphyrin IX monomethyl ester (oxidative) cyclase activity"/>
    <property type="evidence" value="ECO:0007669"/>
    <property type="project" value="UniProtKB-UniRule"/>
</dbReference>
<dbReference type="GO" id="GO:0036070">
    <property type="term" value="P:light-independent bacteriochlorophyll biosynthetic process"/>
    <property type="evidence" value="ECO:0007669"/>
    <property type="project" value="UniProtKB-UniRule"/>
</dbReference>
<dbReference type="GO" id="GO:0015979">
    <property type="term" value="P:photosynthesis"/>
    <property type="evidence" value="ECO:0007669"/>
    <property type="project" value="UniProtKB-UniRule"/>
</dbReference>
<dbReference type="CDD" id="cd01047">
    <property type="entry name" value="ACSF"/>
    <property type="match status" value="1"/>
</dbReference>
<dbReference type="HAMAP" id="MF_01840">
    <property type="entry name" value="AcsF"/>
    <property type="match status" value="1"/>
</dbReference>
<dbReference type="InterPro" id="IPR008434">
    <property type="entry name" value="AcsF"/>
</dbReference>
<dbReference type="InterPro" id="IPR009078">
    <property type="entry name" value="Ferritin-like_SF"/>
</dbReference>
<dbReference type="InterPro" id="IPR003251">
    <property type="entry name" value="Rr_diiron-bd_dom"/>
</dbReference>
<dbReference type="NCBIfam" id="TIGR02029">
    <property type="entry name" value="AcsF"/>
    <property type="match status" value="1"/>
</dbReference>
<dbReference type="NCBIfam" id="NF010172">
    <property type="entry name" value="PRK13654.1"/>
    <property type="match status" value="1"/>
</dbReference>
<dbReference type="PANTHER" id="PTHR31053">
    <property type="entry name" value="MAGNESIUM-PROTOPORPHYRIN IX MONOMETHYL ESTER [OXIDATIVE] CYCLASE, CHLOROPLASTIC"/>
    <property type="match status" value="1"/>
</dbReference>
<dbReference type="PANTHER" id="PTHR31053:SF2">
    <property type="entry name" value="MAGNESIUM-PROTOPORPHYRIN IX MONOMETHYL ESTER [OXIDATIVE] CYCLASE, CHLOROPLASTIC"/>
    <property type="match status" value="1"/>
</dbReference>
<dbReference type="Pfam" id="PF02915">
    <property type="entry name" value="Rubrerythrin"/>
    <property type="match status" value="1"/>
</dbReference>
<dbReference type="SUPFAM" id="SSF47240">
    <property type="entry name" value="Ferritin-like"/>
    <property type="match status" value="1"/>
</dbReference>
<feature type="chain" id="PRO_0000217533" description="Aerobic magnesium-protoporphyrin IX monomethyl ester [oxidative] cyclase">
    <location>
        <begin position="1"/>
        <end position="358"/>
    </location>
</feature>
<organism>
    <name type="scientific">Rubrivivax gelatinosus</name>
    <name type="common">Rhodocyclus gelatinosus</name>
    <name type="synonym">Rhodopseudomonas gelatinosa</name>
    <dbReference type="NCBI Taxonomy" id="28068"/>
    <lineage>
        <taxon>Bacteria</taxon>
        <taxon>Pseudomonadati</taxon>
        <taxon>Pseudomonadota</taxon>
        <taxon>Betaproteobacteria</taxon>
        <taxon>Burkholderiales</taxon>
        <taxon>Sphaerotilaceae</taxon>
        <taxon>Rubrivivax</taxon>
    </lineage>
</organism>
<proteinExistence type="inferred from homology"/>
<reference key="1">
    <citation type="journal article" date="2002" name="J. Bacteriol.">
        <title>Rubrivivax gelatinosus acsF (previously orf358) codes for a conserved, putative binuclear-iron-cluster-containing protein involved in aerobic oxidative cyclization of Mg-protoporphyrin IX monomethylester.</title>
        <authorList>
            <person name="Pinta V."/>
            <person name="Picaud M."/>
            <person name="Reiss-Husson F."/>
            <person name="Astier C."/>
        </authorList>
    </citation>
    <scope>NUCLEOTIDE SEQUENCE [GENOMIC DNA]</scope>
    <scope>FUNCTION</scope>
    <scope>DISRUPTION PHENOTYPE</scope>
    <source>
        <strain>S1</strain>
    </source>
</reference>
<accession>P0DJN9</accession>
<accession>Q8VPB5</accession>
<accession>Q9JPB1</accession>